<gene>
    <name type="ordered locus">MIMI_R542</name>
</gene>
<sequence>MLLNLPYEILLIIFSLIESKKFFKLLSINKEVREFILTMLNQNPKSFSFNLKNCNPKDSIKYLQSVRCLNLSKSTINDDQLKYLSDVYSLNISNCKSITDRGLSFLTQVVKLNVSYNGNITDNGLKNFQRIKKINLCFCGKITDKGIENLVYGKTLNSDEPIPTVINTIRKINLQCCMRITSKCLQHLRRARSINMLYGPQTYNEDLQYIPNIETLKIDGLDVSDKNLTNLKYVKYIFFGRNYPVIFMSHLDKLTKLILPNVPEHIEYIDFNKMPNLVKADLSGCINLLDEQLKGLSKVRKLNLKECYDITDVGLSYLTMVKKINISYCFRITDSGLKYLSNADYVNICGCLKITNEGFFYLKKVPKLVVGYTTLSLYDCMIDGCGDYEYLTISDNTKQLITGKAFHYLENTSQIKIINCNNIIDVDLKSFTNLPTLSKIDLRYCNNITNQGLSALCNIPIVKISNNYQISSKGISYLTNSKKISIESCPKINSFPNLTGLKKLVFKTMGKINMQLIQNLNEYYHIDTIHVYYRDFIDRQHLSSIKINDNIHFISDKF</sequence>
<evidence type="ECO:0000255" key="1">
    <source>
        <dbReference type="PROSITE-ProRule" id="PRU00080"/>
    </source>
</evidence>
<feature type="chain" id="PRO_0000119990" description="Putative F-box/LRR-repeat protein R542">
    <location>
        <begin position="1"/>
        <end position="558"/>
    </location>
</feature>
<feature type="domain" description="F-box" evidence="1">
    <location>
        <begin position="1"/>
        <end position="47"/>
    </location>
</feature>
<feature type="repeat" description="LRR 1">
    <location>
        <begin position="73"/>
        <end position="105"/>
    </location>
</feature>
<feature type="repeat" description="LRR 2">
    <location>
        <begin position="139"/>
        <end position="176"/>
    </location>
</feature>
<feature type="repeat" description="LRR 3">
    <location>
        <begin position="177"/>
        <end position="220"/>
    </location>
</feature>
<feature type="repeat" description="LRR 4">
    <location>
        <begin position="251"/>
        <end position="284"/>
    </location>
</feature>
<feature type="repeat" description="LRR 5">
    <location>
        <begin position="285"/>
        <end position="317"/>
    </location>
</feature>
<feature type="repeat" description="LRR 6">
    <location>
        <begin position="329"/>
        <end position="361"/>
    </location>
</feature>
<feature type="repeat" description="LRR 7">
    <location>
        <begin position="369"/>
        <end position="395"/>
    </location>
</feature>
<feature type="repeat" description="LRR 8">
    <location>
        <begin position="420"/>
        <end position="444"/>
    </location>
</feature>
<feature type="repeat" description="LRR 9">
    <location>
        <begin position="445"/>
        <end position="477"/>
    </location>
</feature>
<feature type="repeat" description="LRR 10">
    <location>
        <begin position="481"/>
        <end position="508"/>
    </location>
</feature>
<organism>
    <name type="scientific">Acanthamoeba polyphaga mimivirus</name>
    <name type="common">APMV</name>
    <dbReference type="NCBI Taxonomy" id="212035"/>
    <lineage>
        <taxon>Viruses</taxon>
        <taxon>Varidnaviria</taxon>
        <taxon>Bamfordvirae</taxon>
        <taxon>Nucleocytoviricota</taxon>
        <taxon>Megaviricetes</taxon>
        <taxon>Imitervirales</taxon>
        <taxon>Mimiviridae</taxon>
        <taxon>Megamimivirinae</taxon>
        <taxon>Mimivirus</taxon>
        <taxon>Mimivirus bradfordmassiliense</taxon>
    </lineage>
</organism>
<organismHost>
    <name type="scientific">Acanthamoeba polyphaga</name>
    <name type="common">Amoeba</name>
    <dbReference type="NCBI Taxonomy" id="5757"/>
</organismHost>
<protein>
    <recommendedName>
        <fullName>Putative F-box/LRR-repeat protein R542</fullName>
    </recommendedName>
</protein>
<name>YR542_MIMIV</name>
<dbReference type="EMBL" id="AY653733">
    <property type="protein sequence ID" value="AAV50806.1"/>
    <property type="molecule type" value="Genomic_DNA"/>
</dbReference>
<dbReference type="KEGG" id="vg:9925176"/>
<dbReference type="Proteomes" id="UP000001134">
    <property type="component" value="Genome"/>
</dbReference>
<dbReference type="GO" id="GO:0019005">
    <property type="term" value="C:SCF ubiquitin ligase complex"/>
    <property type="evidence" value="ECO:0007669"/>
    <property type="project" value="TreeGrafter"/>
</dbReference>
<dbReference type="GO" id="GO:0031146">
    <property type="term" value="P:SCF-dependent proteasomal ubiquitin-dependent protein catabolic process"/>
    <property type="evidence" value="ECO:0007669"/>
    <property type="project" value="TreeGrafter"/>
</dbReference>
<dbReference type="Gene3D" id="3.80.10.10">
    <property type="entry name" value="Ribonuclease Inhibitor"/>
    <property type="match status" value="3"/>
</dbReference>
<dbReference type="InterPro" id="IPR001810">
    <property type="entry name" value="F-box_dom"/>
</dbReference>
<dbReference type="InterPro" id="IPR001611">
    <property type="entry name" value="Leu-rich_rpt"/>
</dbReference>
<dbReference type="InterPro" id="IPR006553">
    <property type="entry name" value="Leu-rich_rpt_Cys-con_subtyp"/>
</dbReference>
<dbReference type="InterPro" id="IPR032675">
    <property type="entry name" value="LRR_dom_sf"/>
</dbReference>
<dbReference type="PANTHER" id="PTHR13318:SF105">
    <property type="entry name" value="F-BOX_LRR-REPEAT PROTEIN 3"/>
    <property type="match status" value="1"/>
</dbReference>
<dbReference type="PANTHER" id="PTHR13318">
    <property type="entry name" value="PARTNER OF PAIRED, ISOFORM B-RELATED"/>
    <property type="match status" value="1"/>
</dbReference>
<dbReference type="Pfam" id="PF13516">
    <property type="entry name" value="LRR_6"/>
    <property type="match status" value="3"/>
</dbReference>
<dbReference type="SMART" id="SM00367">
    <property type="entry name" value="LRR_CC"/>
    <property type="match status" value="6"/>
</dbReference>
<dbReference type="SUPFAM" id="SSF52047">
    <property type="entry name" value="RNI-like"/>
    <property type="match status" value="1"/>
</dbReference>
<dbReference type="PROSITE" id="PS50181">
    <property type="entry name" value="FBOX"/>
    <property type="match status" value="1"/>
</dbReference>
<accession>Q5UQA7</accession>
<reference key="1">
    <citation type="journal article" date="2004" name="Science">
        <title>The 1.2-megabase genome sequence of Mimivirus.</title>
        <authorList>
            <person name="Raoult D."/>
            <person name="Audic S."/>
            <person name="Robert C."/>
            <person name="Abergel C."/>
            <person name="Renesto P."/>
            <person name="Ogata H."/>
            <person name="La Scola B."/>
            <person name="Susan M."/>
            <person name="Claverie J.-M."/>
        </authorList>
    </citation>
    <scope>NUCLEOTIDE SEQUENCE [LARGE SCALE GENOMIC DNA]</scope>
    <source>
        <strain>Rowbotham-Bradford</strain>
    </source>
</reference>
<keyword id="KW-0433">Leucine-rich repeat</keyword>
<keyword id="KW-1185">Reference proteome</keyword>
<keyword id="KW-0677">Repeat</keyword>
<proteinExistence type="predicted"/>